<name>SYFA_SHIFL</name>
<keyword id="KW-0030">Aminoacyl-tRNA synthetase</keyword>
<keyword id="KW-0067">ATP-binding</keyword>
<keyword id="KW-0963">Cytoplasm</keyword>
<keyword id="KW-0436">Ligase</keyword>
<keyword id="KW-0460">Magnesium</keyword>
<keyword id="KW-0479">Metal-binding</keyword>
<keyword id="KW-0547">Nucleotide-binding</keyword>
<keyword id="KW-0648">Protein biosynthesis</keyword>
<keyword id="KW-1185">Reference proteome</keyword>
<protein>
    <recommendedName>
        <fullName evidence="1">Phenylalanine--tRNA ligase alpha subunit</fullName>
        <ecNumber evidence="1">6.1.1.20</ecNumber>
    </recommendedName>
    <alternativeName>
        <fullName evidence="1">Phenylalanyl-tRNA synthetase alpha subunit</fullName>
        <shortName evidence="1">PheRS</shortName>
    </alternativeName>
</protein>
<comment type="catalytic activity">
    <reaction evidence="1">
        <text>tRNA(Phe) + L-phenylalanine + ATP = L-phenylalanyl-tRNA(Phe) + AMP + diphosphate + H(+)</text>
        <dbReference type="Rhea" id="RHEA:19413"/>
        <dbReference type="Rhea" id="RHEA-COMP:9668"/>
        <dbReference type="Rhea" id="RHEA-COMP:9699"/>
        <dbReference type="ChEBI" id="CHEBI:15378"/>
        <dbReference type="ChEBI" id="CHEBI:30616"/>
        <dbReference type="ChEBI" id="CHEBI:33019"/>
        <dbReference type="ChEBI" id="CHEBI:58095"/>
        <dbReference type="ChEBI" id="CHEBI:78442"/>
        <dbReference type="ChEBI" id="CHEBI:78531"/>
        <dbReference type="ChEBI" id="CHEBI:456215"/>
        <dbReference type="EC" id="6.1.1.20"/>
    </reaction>
</comment>
<comment type="cofactor">
    <cofactor evidence="1">
        <name>Mg(2+)</name>
        <dbReference type="ChEBI" id="CHEBI:18420"/>
    </cofactor>
    <text evidence="1">Binds 2 magnesium ions per tetramer.</text>
</comment>
<comment type="subunit">
    <text evidence="1">Tetramer of two alpha and two beta subunits.</text>
</comment>
<comment type="subcellular location">
    <subcellularLocation>
        <location evidence="1">Cytoplasm</location>
    </subcellularLocation>
</comment>
<comment type="similarity">
    <text evidence="1">Belongs to the class-II aminoacyl-tRNA synthetase family. Phe-tRNA synthetase alpha subunit type 1 subfamily.</text>
</comment>
<sequence>MSHLAELVASAKAAISQASDVAALDNVRVEYLGKKGHLTLQMTTLRELPPEERPAAGAVINEAKEQVQQALNARKAELESAALNARLAAETIDVSLPGRRIENGGLHPVTRTIDRIESFFGELGFTVATGPEIEDDYHNFDALNIPGHHPARADHDTFWFDATRLLRTQTSGVQIRTMKAQQPPIRIIAPGRVYRNDYDQTHTPMFHQMEGLIVDTNISFTNLKGTLHDFLRNFFEEDLQIRFRPSYFPFTEPSAEVDVMGKNGKWLEVLGCGMVHPNVLRNVSIDPEVYSGFAFGMGMERLTMLRYGVTDLRSFFENDLRFLKQFK</sequence>
<feature type="chain" id="PRO_0000126758" description="Phenylalanine--tRNA ligase alpha subunit">
    <location>
        <begin position="1"/>
        <end position="327"/>
    </location>
</feature>
<feature type="binding site" evidence="1">
    <location>
        <position position="252"/>
    </location>
    <ligand>
        <name>Mg(2+)</name>
        <dbReference type="ChEBI" id="CHEBI:18420"/>
        <note>shared with beta subunit</note>
    </ligand>
</feature>
<reference key="1">
    <citation type="journal article" date="2002" name="Nucleic Acids Res.">
        <title>Genome sequence of Shigella flexneri 2a: insights into pathogenicity through comparison with genomes of Escherichia coli K12 and O157.</title>
        <authorList>
            <person name="Jin Q."/>
            <person name="Yuan Z."/>
            <person name="Xu J."/>
            <person name="Wang Y."/>
            <person name="Shen Y."/>
            <person name="Lu W."/>
            <person name="Wang J."/>
            <person name="Liu H."/>
            <person name="Yang J."/>
            <person name="Yang F."/>
            <person name="Zhang X."/>
            <person name="Zhang J."/>
            <person name="Yang G."/>
            <person name="Wu H."/>
            <person name="Qu D."/>
            <person name="Dong J."/>
            <person name="Sun L."/>
            <person name="Xue Y."/>
            <person name="Zhao A."/>
            <person name="Gao Y."/>
            <person name="Zhu J."/>
            <person name="Kan B."/>
            <person name="Ding K."/>
            <person name="Chen S."/>
            <person name="Cheng H."/>
            <person name="Yao Z."/>
            <person name="He B."/>
            <person name="Chen R."/>
            <person name="Ma D."/>
            <person name="Qiang B."/>
            <person name="Wen Y."/>
            <person name="Hou Y."/>
            <person name="Yu J."/>
        </authorList>
    </citation>
    <scope>NUCLEOTIDE SEQUENCE [LARGE SCALE GENOMIC DNA]</scope>
    <source>
        <strain>301 / Serotype 2a</strain>
    </source>
</reference>
<reference key="2">
    <citation type="journal article" date="2003" name="Infect. Immun.">
        <title>Complete genome sequence and comparative genomics of Shigella flexneri serotype 2a strain 2457T.</title>
        <authorList>
            <person name="Wei J."/>
            <person name="Goldberg M.B."/>
            <person name="Burland V."/>
            <person name="Venkatesan M.M."/>
            <person name="Deng W."/>
            <person name="Fournier G."/>
            <person name="Mayhew G.F."/>
            <person name="Plunkett G. III"/>
            <person name="Rose D.J."/>
            <person name="Darling A."/>
            <person name="Mau B."/>
            <person name="Perna N.T."/>
            <person name="Payne S.M."/>
            <person name="Runyen-Janecky L.J."/>
            <person name="Zhou S."/>
            <person name="Schwartz D.C."/>
            <person name="Blattner F.R."/>
        </authorList>
    </citation>
    <scope>NUCLEOTIDE SEQUENCE [LARGE SCALE GENOMIC DNA]</scope>
    <source>
        <strain>ATCC 700930 / 2457T / Serotype 2a</strain>
    </source>
</reference>
<evidence type="ECO:0000255" key="1">
    <source>
        <dbReference type="HAMAP-Rule" id="MF_00281"/>
    </source>
</evidence>
<proteinExistence type="inferred from homology"/>
<gene>
    <name evidence="1" type="primary">pheS</name>
    <name type="ordered locus">SF1517</name>
    <name type="ordered locus">S1634</name>
</gene>
<accession>Q83L37</accession>
<organism>
    <name type="scientific">Shigella flexneri</name>
    <dbReference type="NCBI Taxonomy" id="623"/>
    <lineage>
        <taxon>Bacteria</taxon>
        <taxon>Pseudomonadati</taxon>
        <taxon>Pseudomonadota</taxon>
        <taxon>Gammaproteobacteria</taxon>
        <taxon>Enterobacterales</taxon>
        <taxon>Enterobacteriaceae</taxon>
        <taxon>Shigella</taxon>
    </lineage>
</organism>
<dbReference type="EC" id="6.1.1.20" evidence="1"/>
<dbReference type="EMBL" id="AE005674">
    <property type="protein sequence ID" value="AAN43107.1"/>
    <property type="molecule type" value="Genomic_DNA"/>
</dbReference>
<dbReference type="EMBL" id="AE014073">
    <property type="protein sequence ID" value="AAP16997.1"/>
    <property type="molecule type" value="Genomic_DNA"/>
</dbReference>
<dbReference type="RefSeq" id="NP_707400.1">
    <property type="nucleotide sequence ID" value="NC_004337.2"/>
</dbReference>
<dbReference type="RefSeq" id="WP_000018591.1">
    <property type="nucleotide sequence ID" value="NZ_WPGW01000051.1"/>
</dbReference>
<dbReference type="SMR" id="Q83L37"/>
<dbReference type="STRING" id="198214.SF1517"/>
<dbReference type="PaxDb" id="198214-SF1517"/>
<dbReference type="GeneID" id="1024708"/>
<dbReference type="KEGG" id="sfl:SF1517"/>
<dbReference type="KEGG" id="sfx:S1634"/>
<dbReference type="PATRIC" id="fig|198214.7.peg.1792"/>
<dbReference type="HOGENOM" id="CLU_025086_0_1_6"/>
<dbReference type="Proteomes" id="UP000001006">
    <property type="component" value="Chromosome"/>
</dbReference>
<dbReference type="Proteomes" id="UP000002673">
    <property type="component" value="Chromosome"/>
</dbReference>
<dbReference type="GO" id="GO:0005737">
    <property type="term" value="C:cytoplasm"/>
    <property type="evidence" value="ECO:0007669"/>
    <property type="project" value="UniProtKB-SubCell"/>
</dbReference>
<dbReference type="GO" id="GO:0005524">
    <property type="term" value="F:ATP binding"/>
    <property type="evidence" value="ECO:0007669"/>
    <property type="project" value="UniProtKB-UniRule"/>
</dbReference>
<dbReference type="GO" id="GO:0000287">
    <property type="term" value="F:magnesium ion binding"/>
    <property type="evidence" value="ECO:0007669"/>
    <property type="project" value="UniProtKB-UniRule"/>
</dbReference>
<dbReference type="GO" id="GO:0004826">
    <property type="term" value="F:phenylalanine-tRNA ligase activity"/>
    <property type="evidence" value="ECO:0007669"/>
    <property type="project" value="UniProtKB-UniRule"/>
</dbReference>
<dbReference type="GO" id="GO:0000049">
    <property type="term" value="F:tRNA binding"/>
    <property type="evidence" value="ECO:0007669"/>
    <property type="project" value="InterPro"/>
</dbReference>
<dbReference type="GO" id="GO:0006432">
    <property type="term" value="P:phenylalanyl-tRNA aminoacylation"/>
    <property type="evidence" value="ECO:0007669"/>
    <property type="project" value="UniProtKB-UniRule"/>
</dbReference>
<dbReference type="CDD" id="cd00496">
    <property type="entry name" value="PheRS_alpha_core"/>
    <property type="match status" value="1"/>
</dbReference>
<dbReference type="FunFam" id="3.30.930.10:FF:000003">
    <property type="entry name" value="Phenylalanine--tRNA ligase alpha subunit"/>
    <property type="match status" value="1"/>
</dbReference>
<dbReference type="Gene3D" id="3.30.930.10">
    <property type="entry name" value="Bira Bifunctional Protein, Domain 2"/>
    <property type="match status" value="1"/>
</dbReference>
<dbReference type="HAMAP" id="MF_00281">
    <property type="entry name" value="Phe_tRNA_synth_alpha1"/>
    <property type="match status" value="1"/>
</dbReference>
<dbReference type="InterPro" id="IPR006195">
    <property type="entry name" value="aa-tRNA-synth_II"/>
</dbReference>
<dbReference type="InterPro" id="IPR045864">
    <property type="entry name" value="aa-tRNA-synth_II/BPL/LPL"/>
</dbReference>
<dbReference type="InterPro" id="IPR004529">
    <property type="entry name" value="Phe-tRNA-synth_IIc_asu"/>
</dbReference>
<dbReference type="InterPro" id="IPR004188">
    <property type="entry name" value="Phe-tRNA_ligase_II_N"/>
</dbReference>
<dbReference type="InterPro" id="IPR022911">
    <property type="entry name" value="Phe_tRNA_ligase_alpha1_bac"/>
</dbReference>
<dbReference type="InterPro" id="IPR002319">
    <property type="entry name" value="Phenylalanyl-tRNA_Synthase"/>
</dbReference>
<dbReference type="InterPro" id="IPR010978">
    <property type="entry name" value="tRNA-bd_arm"/>
</dbReference>
<dbReference type="NCBIfam" id="TIGR00468">
    <property type="entry name" value="pheS"/>
    <property type="match status" value="1"/>
</dbReference>
<dbReference type="PANTHER" id="PTHR11538:SF41">
    <property type="entry name" value="PHENYLALANINE--TRNA LIGASE, MITOCHONDRIAL"/>
    <property type="match status" value="1"/>
</dbReference>
<dbReference type="PANTHER" id="PTHR11538">
    <property type="entry name" value="PHENYLALANYL-TRNA SYNTHETASE"/>
    <property type="match status" value="1"/>
</dbReference>
<dbReference type="Pfam" id="PF02912">
    <property type="entry name" value="Phe_tRNA-synt_N"/>
    <property type="match status" value="1"/>
</dbReference>
<dbReference type="Pfam" id="PF01409">
    <property type="entry name" value="tRNA-synt_2d"/>
    <property type="match status" value="1"/>
</dbReference>
<dbReference type="SUPFAM" id="SSF55681">
    <property type="entry name" value="Class II aaRS and biotin synthetases"/>
    <property type="match status" value="1"/>
</dbReference>
<dbReference type="SUPFAM" id="SSF46589">
    <property type="entry name" value="tRNA-binding arm"/>
    <property type="match status" value="1"/>
</dbReference>
<dbReference type="PROSITE" id="PS50862">
    <property type="entry name" value="AA_TRNA_LIGASE_II"/>
    <property type="match status" value="1"/>
</dbReference>